<gene>
    <name evidence="1" type="primary">rpmF</name>
    <name type="ordered locus">Ppha_0201</name>
</gene>
<organism>
    <name type="scientific">Pelodictyon phaeoclathratiforme (strain DSM 5477 / BU-1)</name>
    <dbReference type="NCBI Taxonomy" id="324925"/>
    <lineage>
        <taxon>Bacteria</taxon>
        <taxon>Pseudomonadati</taxon>
        <taxon>Chlorobiota</taxon>
        <taxon>Chlorobiia</taxon>
        <taxon>Chlorobiales</taxon>
        <taxon>Chlorobiaceae</taxon>
        <taxon>Chlorobium/Pelodictyon group</taxon>
        <taxon>Pelodictyon</taxon>
    </lineage>
</organism>
<proteinExistence type="inferred from homology"/>
<evidence type="ECO:0000255" key="1">
    <source>
        <dbReference type="HAMAP-Rule" id="MF_00340"/>
    </source>
</evidence>
<evidence type="ECO:0000256" key="2">
    <source>
        <dbReference type="SAM" id="MobiDB-lite"/>
    </source>
</evidence>
<evidence type="ECO:0000305" key="3"/>
<feature type="chain" id="PRO_1000120154" description="Large ribosomal subunit protein bL32">
    <location>
        <begin position="1"/>
        <end position="63"/>
    </location>
</feature>
<feature type="region of interest" description="Disordered" evidence="2">
    <location>
        <begin position="1"/>
        <end position="27"/>
    </location>
</feature>
<feature type="compositionally biased region" description="Basic residues" evidence="2">
    <location>
        <begin position="7"/>
        <end position="18"/>
    </location>
</feature>
<accession>B4SBB7</accession>
<dbReference type="EMBL" id="CP001110">
    <property type="protein sequence ID" value="ACF42538.1"/>
    <property type="molecule type" value="Genomic_DNA"/>
</dbReference>
<dbReference type="RefSeq" id="WP_012507034.1">
    <property type="nucleotide sequence ID" value="NC_011060.1"/>
</dbReference>
<dbReference type="SMR" id="B4SBB7"/>
<dbReference type="STRING" id="324925.Ppha_0201"/>
<dbReference type="KEGG" id="pph:Ppha_0201"/>
<dbReference type="eggNOG" id="COG0333">
    <property type="taxonomic scope" value="Bacteria"/>
</dbReference>
<dbReference type="HOGENOM" id="CLU_129084_1_3_10"/>
<dbReference type="OrthoDB" id="9812874at2"/>
<dbReference type="Proteomes" id="UP000002724">
    <property type="component" value="Chromosome"/>
</dbReference>
<dbReference type="GO" id="GO:0015934">
    <property type="term" value="C:large ribosomal subunit"/>
    <property type="evidence" value="ECO:0007669"/>
    <property type="project" value="InterPro"/>
</dbReference>
<dbReference type="GO" id="GO:0003735">
    <property type="term" value="F:structural constituent of ribosome"/>
    <property type="evidence" value="ECO:0007669"/>
    <property type="project" value="InterPro"/>
</dbReference>
<dbReference type="GO" id="GO:0006412">
    <property type="term" value="P:translation"/>
    <property type="evidence" value="ECO:0007669"/>
    <property type="project" value="UniProtKB-UniRule"/>
</dbReference>
<dbReference type="HAMAP" id="MF_00340">
    <property type="entry name" value="Ribosomal_bL32"/>
    <property type="match status" value="1"/>
</dbReference>
<dbReference type="InterPro" id="IPR002677">
    <property type="entry name" value="Ribosomal_bL32"/>
</dbReference>
<dbReference type="InterPro" id="IPR044957">
    <property type="entry name" value="Ribosomal_bL32_bact"/>
</dbReference>
<dbReference type="InterPro" id="IPR011332">
    <property type="entry name" value="Ribosomal_zn-bd"/>
</dbReference>
<dbReference type="NCBIfam" id="TIGR01031">
    <property type="entry name" value="rpmF_bact"/>
    <property type="match status" value="1"/>
</dbReference>
<dbReference type="PANTHER" id="PTHR35534">
    <property type="entry name" value="50S RIBOSOMAL PROTEIN L32"/>
    <property type="match status" value="1"/>
</dbReference>
<dbReference type="PANTHER" id="PTHR35534:SF1">
    <property type="entry name" value="LARGE RIBOSOMAL SUBUNIT PROTEIN BL32"/>
    <property type="match status" value="1"/>
</dbReference>
<dbReference type="Pfam" id="PF01783">
    <property type="entry name" value="Ribosomal_L32p"/>
    <property type="match status" value="1"/>
</dbReference>
<dbReference type="SUPFAM" id="SSF57829">
    <property type="entry name" value="Zn-binding ribosomal proteins"/>
    <property type="match status" value="1"/>
</dbReference>
<protein>
    <recommendedName>
        <fullName evidence="1">Large ribosomal subunit protein bL32</fullName>
    </recommendedName>
    <alternativeName>
        <fullName evidence="3">50S ribosomal protein L32</fullName>
    </alternativeName>
</protein>
<keyword id="KW-1185">Reference proteome</keyword>
<keyword id="KW-0687">Ribonucleoprotein</keyword>
<keyword id="KW-0689">Ribosomal protein</keyword>
<comment type="similarity">
    <text evidence="1">Belongs to the bacterial ribosomal protein bL32 family.</text>
</comment>
<sequence length="63" mass="7107">MANPKAKMSKSRRDKRRAQFNARTKPATTVNCPNCGEPTLPHRACRHCGHYRGRCVVNKLAKS</sequence>
<reference key="1">
    <citation type="submission" date="2008-06" db="EMBL/GenBank/DDBJ databases">
        <title>Complete sequence of Pelodictyon phaeoclathratiforme BU-1.</title>
        <authorList>
            <consortium name="US DOE Joint Genome Institute"/>
            <person name="Lucas S."/>
            <person name="Copeland A."/>
            <person name="Lapidus A."/>
            <person name="Glavina del Rio T."/>
            <person name="Dalin E."/>
            <person name="Tice H."/>
            <person name="Bruce D."/>
            <person name="Goodwin L."/>
            <person name="Pitluck S."/>
            <person name="Schmutz J."/>
            <person name="Larimer F."/>
            <person name="Land M."/>
            <person name="Hauser L."/>
            <person name="Kyrpides N."/>
            <person name="Mikhailova N."/>
            <person name="Liu Z."/>
            <person name="Li T."/>
            <person name="Zhao F."/>
            <person name="Overmann J."/>
            <person name="Bryant D.A."/>
            <person name="Richardson P."/>
        </authorList>
    </citation>
    <scope>NUCLEOTIDE SEQUENCE [LARGE SCALE GENOMIC DNA]</scope>
    <source>
        <strain>DSM 5477 / BU-1</strain>
    </source>
</reference>
<name>RL32_PELPB</name>